<keyword id="KW-0963">Cytoplasm</keyword>
<keyword id="KW-1185">Reference proteome</keyword>
<keyword id="KW-0677">Repeat</keyword>
<keyword id="KW-0808">Transferase</keyword>
<dbReference type="EC" id="2.8.1.2" evidence="2"/>
<dbReference type="EMBL" id="AE004091">
    <property type="protein sequence ID" value="AAG04681.1"/>
    <property type="molecule type" value="Genomic_DNA"/>
</dbReference>
<dbReference type="PIR" id="D83485">
    <property type="entry name" value="D83485"/>
</dbReference>
<dbReference type="RefSeq" id="NP_249983.1">
    <property type="nucleotide sequence ID" value="NC_002516.2"/>
</dbReference>
<dbReference type="RefSeq" id="WP_003109274.1">
    <property type="nucleotide sequence ID" value="NZ_QZGE01000005.1"/>
</dbReference>
<dbReference type="SMR" id="Q9I452"/>
<dbReference type="FunCoup" id="Q9I452">
    <property type="interactions" value="653"/>
</dbReference>
<dbReference type="STRING" id="208964.PA1292"/>
<dbReference type="PaxDb" id="208964-PA1292"/>
<dbReference type="DNASU" id="881495"/>
<dbReference type="GeneID" id="881495"/>
<dbReference type="KEGG" id="pae:PA1292"/>
<dbReference type="PATRIC" id="fig|208964.12.peg.1342"/>
<dbReference type="PseudoCAP" id="PA1292"/>
<dbReference type="HOGENOM" id="CLU_031618_0_0_6"/>
<dbReference type="InParanoid" id="Q9I452"/>
<dbReference type="OrthoDB" id="9781034at2"/>
<dbReference type="PhylomeDB" id="Q9I452"/>
<dbReference type="BioCyc" id="PAER208964:G1FZ6-1317-MONOMER"/>
<dbReference type="Proteomes" id="UP000002438">
    <property type="component" value="Chromosome"/>
</dbReference>
<dbReference type="GO" id="GO:0005737">
    <property type="term" value="C:cytoplasm"/>
    <property type="evidence" value="ECO:0007669"/>
    <property type="project" value="UniProtKB-SubCell"/>
</dbReference>
<dbReference type="GO" id="GO:0016784">
    <property type="term" value="F:3-mercaptopyruvate sulfurtransferase activity"/>
    <property type="evidence" value="ECO:0007669"/>
    <property type="project" value="UniProtKB-EC"/>
</dbReference>
<dbReference type="GO" id="GO:0004792">
    <property type="term" value="F:thiosulfate-cyanide sulfurtransferase activity"/>
    <property type="evidence" value="ECO:0000318"/>
    <property type="project" value="GO_Central"/>
</dbReference>
<dbReference type="CDD" id="cd01448">
    <property type="entry name" value="TST_Repeat_1"/>
    <property type="match status" value="1"/>
</dbReference>
<dbReference type="CDD" id="cd01449">
    <property type="entry name" value="TST_Repeat_2"/>
    <property type="match status" value="1"/>
</dbReference>
<dbReference type="FunFam" id="3.40.250.10:FF:000035">
    <property type="entry name" value="Thiosulfate sulfurtransferase"/>
    <property type="match status" value="1"/>
</dbReference>
<dbReference type="FunFam" id="3.40.250.10:FF:000048">
    <property type="entry name" value="Thiosulfate sulfurtransferase"/>
    <property type="match status" value="1"/>
</dbReference>
<dbReference type="Gene3D" id="3.40.250.10">
    <property type="entry name" value="Rhodanese-like domain"/>
    <property type="match status" value="2"/>
</dbReference>
<dbReference type="InterPro" id="IPR001763">
    <property type="entry name" value="Rhodanese-like_dom"/>
</dbReference>
<dbReference type="InterPro" id="IPR036873">
    <property type="entry name" value="Rhodanese-like_dom_sf"/>
</dbReference>
<dbReference type="InterPro" id="IPR045078">
    <property type="entry name" value="TST/MPST-like"/>
</dbReference>
<dbReference type="PANTHER" id="PTHR11364:SF27">
    <property type="entry name" value="SULFURTRANSFERASE"/>
    <property type="match status" value="1"/>
</dbReference>
<dbReference type="PANTHER" id="PTHR11364">
    <property type="entry name" value="THIOSULFATE SULFERTANSFERASE"/>
    <property type="match status" value="1"/>
</dbReference>
<dbReference type="Pfam" id="PF00581">
    <property type="entry name" value="Rhodanese"/>
    <property type="match status" value="2"/>
</dbReference>
<dbReference type="SMART" id="SM00450">
    <property type="entry name" value="RHOD"/>
    <property type="match status" value="2"/>
</dbReference>
<dbReference type="SUPFAM" id="SSF52821">
    <property type="entry name" value="Rhodanese/Cell cycle control phosphatase"/>
    <property type="match status" value="2"/>
</dbReference>
<dbReference type="PROSITE" id="PS50206">
    <property type="entry name" value="RHODANESE_3"/>
    <property type="match status" value="2"/>
</dbReference>
<accession>Q9I452</accession>
<feature type="chain" id="PRO_0000139411" description="Probable 3-mercaptopyruvate sulfurtransferase">
    <location>
        <begin position="1"/>
        <end position="284"/>
    </location>
</feature>
<feature type="domain" description="Rhodanese 1" evidence="3">
    <location>
        <begin position="17"/>
        <end position="138"/>
    </location>
</feature>
<feature type="domain" description="Rhodanese 2" evidence="3">
    <location>
        <begin position="168"/>
        <end position="281"/>
    </location>
</feature>
<feature type="region of interest" description="Substrate specificity" evidence="1">
    <location>
        <begin position="241"/>
        <end position="247"/>
    </location>
</feature>
<feature type="active site" description="Cysteine persulfide intermediate" evidence="3">
    <location>
        <position position="241"/>
    </location>
</feature>
<feature type="binding site" evidence="1">
    <location>
        <position position="182"/>
    </location>
    <ligand>
        <name>substrate</name>
    </ligand>
</feature>
<evidence type="ECO:0000250" key="1"/>
<evidence type="ECO:0000250" key="2">
    <source>
        <dbReference type="UniProtKB" id="P31142"/>
    </source>
</evidence>
<evidence type="ECO:0000255" key="3">
    <source>
        <dbReference type="PROSITE-ProRule" id="PRU00173"/>
    </source>
</evidence>
<evidence type="ECO:0000305" key="4"/>
<protein>
    <recommendedName>
        <fullName evidence="2">Probable 3-mercaptopyruvate sulfurtransferase</fullName>
        <shortName evidence="2">MST</shortName>
        <ecNumber evidence="2">2.8.1.2</ecNumber>
    </recommendedName>
    <alternativeName>
        <fullName>Rhodanese-like protein</fullName>
    </alternativeName>
</protein>
<sequence>MSSAQLLTAQQLAARLSEPDLLVLDCRFALEDPSYGARVYQENHIPGAHFADLERDLSAPVRKGVTGRHPLPDPAELALKLQAWGLRQDSQVVLYDDGPGAFAARAWWLLHWLGKRDGVYLLDGGLAAWKAAGLALTNGESSLRPGDFQGQPDASLLIDAATLQAQLGQPGLALLDARAQPRFRGEVEPIDPVAGHIPGAQCAAFTDNLGSDGRFLPPEQLHQRFSALLRGRPVDELVAYCGSGVTACHNLFALSLAGFPLPRLYAGSWSEWITDPRRPVATGD</sequence>
<name>THTM_PSEAE</name>
<organism>
    <name type="scientific">Pseudomonas aeruginosa (strain ATCC 15692 / DSM 22644 / CIP 104116 / JCM 14847 / LMG 12228 / 1C / PRS 101 / PAO1)</name>
    <dbReference type="NCBI Taxonomy" id="208964"/>
    <lineage>
        <taxon>Bacteria</taxon>
        <taxon>Pseudomonadati</taxon>
        <taxon>Pseudomonadota</taxon>
        <taxon>Gammaproteobacteria</taxon>
        <taxon>Pseudomonadales</taxon>
        <taxon>Pseudomonadaceae</taxon>
        <taxon>Pseudomonas</taxon>
    </lineage>
</organism>
<comment type="function">
    <text evidence="2">Catalyzes the transfer of sulfur from 3-mercaptopyruvate to a thiol-containing acceptor to form an intramolecular disulfide releasing hydrogen sulfide and pyruvate.</text>
</comment>
<comment type="catalytic activity">
    <reaction evidence="2">
        <text>2-oxo-3-sulfanylpropanoate + [thioredoxin]-dithiol = [thioredoxin]-disulfide + hydrogen sulfide + pyruvate + H(+)</text>
        <dbReference type="Rhea" id="RHEA:21740"/>
        <dbReference type="Rhea" id="RHEA-COMP:10698"/>
        <dbReference type="Rhea" id="RHEA-COMP:10700"/>
        <dbReference type="ChEBI" id="CHEBI:15361"/>
        <dbReference type="ChEBI" id="CHEBI:15378"/>
        <dbReference type="ChEBI" id="CHEBI:29919"/>
        <dbReference type="ChEBI" id="CHEBI:29950"/>
        <dbReference type="ChEBI" id="CHEBI:50058"/>
        <dbReference type="ChEBI" id="CHEBI:57678"/>
        <dbReference type="EC" id="2.8.1.2"/>
    </reaction>
</comment>
<comment type="subcellular location">
    <subcellularLocation>
        <location evidence="4">Cytoplasm</location>
    </subcellularLocation>
</comment>
<comment type="domain">
    <text>The N-terminal region is the non-catalytic domain; the C-terminus contains the active-site cysteine residue and the CGSGVTA motif probably responsible for substrate specificity.</text>
</comment>
<comment type="domain">
    <text evidence="1">Contains two rhodanese domains with different primary structures but with near identical secondary structure conformations suggesting a common evolutionary origin. Only the C-terminal rhodanese domain contains the catalytic cysteine residue (By similarity).</text>
</comment>
<reference key="1">
    <citation type="journal article" date="2000" name="Nature">
        <title>Complete genome sequence of Pseudomonas aeruginosa PAO1, an opportunistic pathogen.</title>
        <authorList>
            <person name="Stover C.K."/>
            <person name="Pham X.-Q.T."/>
            <person name="Erwin A.L."/>
            <person name="Mizoguchi S.D."/>
            <person name="Warrener P."/>
            <person name="Hickey M.J."/>
            <person name="Brinkman F.S.L."/>
            <person name="Hufnagle W.O."/>
            <person name="Kowalik D.J."/>
            <person name="Lagrou M."/>
            <person name="Garber R.L."/>
            <person name="Goltry L."/>
            <person name="Tolentino E."/>
            <person name="Westbrock-Wadman S."/>
            <person name="Yuan Y."/>
            <person name="Brody L.L."/>
            <person name="Coulter S.N."/>
            <person name="Folger K.R."/>
            <person name="Kas A."/>
            <person name="Larbig K."/>
            <person name="Lim R.M."/>
            <person name="Smith K.A."/>
            <person name="Spencer D.H."/>
            <person name="Wong G.K.-S."/>
            <person name="Wu Z."/>
            <person name="Paulsen I.T."/>
            <person name="Reizer J."/>
            <person name="Saier M.H. Jr."/>
            <person name="Hancock R.E.W."/>
            <person name="Lory S."/>
            <person name="Olson M.V."/>
        </authorList>
    </citation>
    <scope>NUCLEOTIDE SEQUENCE [LARGE SCALE GENOMIC DNA]</scope>
    <source>
        <strain>ATCC 15692 / DSM 22644 / CIP 104116 / JCM 14847 / LMG 12228 / 1C / PRS 101 / PAO1</strain>
    </source>
</reference>
<proteinExistence type="inferred from homology"/>
<gene>
    <name type="primary">sseA</name>
    <name type="ordered locus">PA1292</name>
</gene>